<feature type="chain" id="PRO_0000259600" description="Transmembrane protein 74">
    <location>
        <begin position="1"/>
        <end position="305"/>
    </location>
</feature>
<feature type="transmembrane region" description="Helical" evidence="1">
    <location>
        <begin position="178"/>
        <end position="198"/>
    </location>
</feature>
<feature type="transmembrane region" description="Helical" evidence="1">
    <location>
        <begin position="232"/>
        <end position="252"/>
    </location>
</feature>
<feature type="region of interest" description="Disordered" evidence="2">
    <location>
        <begin position="52"/>
        <end position="88"/>
    </location>
</feature>
<feature type="region of interest" description="Disordered" evidence="2">
    <location>
        <begin position="123"/>
        <end position="143"/>
    </location>
</feature>
<feature type="compositionally biased region" description="Low complexity" evidence="2">
    <location>
        <begin position="58"/>
        <end position="78"/>
    </location>
</feature>
<comment type="function">
    <text evidence="3 4">Plays an essential role in autophagy. TMEM74-induced autophagy may involve PI3K signal transduction.</text>
</comment>
<comment type="interaction">
    <interactant intactId="EBI-10292091">
        <id>Q96NL1</id>
    </interactant>
    <interactant intactId="EBI-13059134">
        <id>Q13520</id>
        <label>AQP6</label>
    </interactant>
    <organismsDiffer>false</organismsDiffer>
    <experiments>3</experiments>
</comment>
<comment type="interaction">
    <interactant intactId="EBI-10292091">
        <id>Q96NL1</id>
    </interactant>
    <interactant intactId="EBI-743099">
        <id>Q969F0</id>
        <label>FATE1</label>
    </interactant>
    <organismsDiffer>false</organismsDiffer>
    <experiments>3</experiments>
</comment>
<comment type="interaction">
    <interactant intactId="EBI-10292091">
        <id>Q96NL1</id>
    </interactant>
    <interactant intactId="EBI-2830566">
        <id>Q9H400</id>
        <label>LIME1</label>
    </interactant>
    <organismsDiffer>false</organismsDiffer>
    <experiments>3</experiments>
</comment>
<comment type="interaction">
    <interactant intactId="EBI-10292091">
        <id>Q96NL1</id>
    </interactant>
    <interactant intactId="EBI-12070086">
        <id>Q5J8X5</id>
        <label>MS4A13</label>
    </interactant>
    <organismsDiffer>false</organismsDiffer>
    <experiments>3</experiments>
</comment>
<comment type="interaction">
    <interactant intactId="EBI-10292091">
        <id>Q96NL1</id>
    </interactant>
    <interactant intactId="EBI-12038591">
        <id>Q69YG0</id>
        <label>TMEM42</label>
    </interactant>
    <organismsDiffer>false</organismsDiffer>
    <experiments>3</experiments>
</comment>
<comment type="subcellular location">
    <subcellularLocation>
        <location evidence="3">Lysosome membrane</location>
        <topology evidence="3">Multi-pass membrane protein</topology>
    </subcellularLocation>
    <subcellularLocation>
        <location evidence="3">Cytoplasmic vesicle</location>
        <location evidence="3">Autophagosome membrane</location>
        <topology evidence="3">Multi-pass membrane protein</topology>
    </subcellularLocation>
</comment>
<comment type="tissue specificity">
    <text evidence="3">Expressed in heart, lung, and placenta.</text>
</comment>
<comment type="similarity">
    <text evidence="5">Belongs to the TMEM74 family.</text>
</comment>
<evidence type="ECO:0000255" key="1"/>
<evidence type="ECO:0000256" key="2">
    <source>
        <dbReference type="SAM" id="MobiDB-lite"/>
    </source>
</evidence>
<evidence type="ECO:0000269" key="3">
    <source>
    </source>
</evidence>
<evidence type="ECO:0000269" key="4">
    <source>
    </source>
</evidence>
<evidence type="ECO:0000305" key="5"/>
<organism>
    <name type="scientific">Homo sapiens</name>
    <name type="common">Human</name>
    <dbReference type="NCBI Taxonomy" id="9606"/>
    <lineage>
        <taxon>Eukaryota</taxon>
        <taxon>Metazoa</taxon>
        <taxon>Chordata</taxon>
        <taxon>Craniata</taxon>
        <taxon>Vertebrata</taxon>
        <taxon>Euteleostomi</taxon>
        <taxon>Mammalia</taxon>
        <taxon>Eutheria</taxon>
        <taxon>Euarchontoglires</taxon>
        <taxon>Primates</taxon>
        <taxon>Haplorrhini</taxon>
        <taxon>Catarrhini</taxon>
        <taxon>Hominidae</taxon>
        <taxon>Homo</taxon>
    </lineage>
</organism>
<accession>Q96NL1</accession>
<name>TMM74_HUMAN</name>
<gene>
    <name type="primary">TMEM74</name>
</gene>
<sequence length="305" mass="33338">MELHYLAKKSNQADLCDARDWSSRGLPGDQADTAATRAALCCQKQCASTPRATEMEGSKLSSSPASPSSSLQNSTLQPDAFPPGLLHSGNNQITAERKVCNCCSQELETSFTYVDKNINLEQRNRSSPSAKGHNHPGELGWENPNEWSQEAAISLISEEEDDTSSEATSSGKSIDYGFISAILFLVTGILLVIISYIVPREVTVDPNTVAAREMERLEKESARLGAHLDRCVIAGLCLLTLGGVILSCLLMMSMWKGELYRRNRFASSKESAKLYGSFNFRMKTSTNENTLELSLVEEDALAVQS</sequence>
<keyword id="KW-0072">Autophagy</keyword>
<keyword id="KW-0968">Cytoplasmic vesicle</keyword>
<keyword id="KW-0458">Lysosome</keyword>
<keyword id="KW-0472">Membrane</keyword>
<keyword id="KW-1267">Proteomics identification</keyword>
<keyword id="KW-1185">Reference proteome</keyword>
<keyword id="KW-0812">Transmembrane</keyword>
<keyword id="KW-1133">Transmembrane helix</keyword>
<dbReference type="EMBL" id="AK055230">
    <property type="protein sequence ID" value="BAB70881.1"/>
    <property type="molecule type" value="mRNA"/>
</dbReference>
<dbReference type="EMBL" id="BC030710">
    <property type="protein sequence ID" value="AAH30710.1"/>
    <property type="molecule type" value="mRNA"/>
</dbReference>
<dbReference type="CCDS" id="CCDS6310.1"/>
<dbReference type="RefSeq" id="NP_694560.1">
    <property type="nucleotide sequence ID" value="NM_153015.3"/>
</dbReference>
<dbReference type="BioGRID" id="127621">
    <property type="interactions" value="124"/>
</dbReference>
<dbReference type="FunCoup" id="Q96NL1">
    <property type="interactions" value="42"/>
</dbReference>
<dbReference type="IntAct" id="Q96NL1">
    <property type="interactions" value="119"/>
</dbReference>
<dbReference type="STRING" id="9606.ENSP00000297459"/>
<dbReference type="TCDB" id="8.A.122.2.1">
    <property type="family name" value="the vesicular membrane neurensin/tmem74 (neurensin/tmem74) family"/>
</dbReference>
<dbReference type="iPTMnet" id="Q96NL1"/>
<dbReference type="PhosphoSitePlus" id="Q96NL1"/>
<dbReference type="BioMuta" id="TMEM74"/>
<dbReference type="DMDM" id="74732587"/>
<dbReference type="jPOST" id="Q96NL1"/>
<dbReference type="MassIVE" id="Q96NL1"/>
<dbReference type="PaxDb" id="9606-ENSP00000297459"/>
<dbReference type="PeptideAtlas" id="Q96NL1"/>
<dbReference type="ProteomicsDB" id="77529"/>
<dbReference type="Antibodypedia" id="3040">
    <property type="antibodies" value="83 antibodies from 22 providers"/>
</dbReference>
<dbReference type="DNASU" id="157753"/>
<dbReference type="Ensembl" id="ENST00000297459.4">
    <property type="protein sequence ID" value="ENSP00000297459.3"/>
    <property type="gene ID" value="ENSG00000164841.5"/>
</dbReference>
<dbReference type="GeneID" id="157753"/>
<dbReference type="KEGG" id="hsa:157753"/>
<dbReference type="MANE-Select" id="ENST00000297459.4">
    <property type="protein sequence ID" value="ENSP00000297459.3"/>
    <property type="RefSeq nucleotide sequence ID" value="NM_153015.3"/>
    <property type="RefSeq protein sequence ID" value="NP_694560.1"/>
</dbReference>
<dbReference type="UCSC" id="uc003ymy.2">
    <property type="organism name" value="human"/>
</dbReference>
<dbReference type="AGR" id="HGNC:26409"/>
<dbReference type="CTD" id="157753"/>
<dbReference type="DisGeNET" id="157753"/>
<dbReference type="GeneCards" id="TMEM74"/>
<dbReference type="HGNC" id="HGNC:26409">
    <property type="gene designation" value="TMEM74"/>
</dbReference>
<dbReference type="HPA" id="ENSG00000164841">
    <property type="expression patterns" value="Tissue enhanced (brain, retina)"/>
</dbReference>
<dbReference type="MIM" id="613935">
    <property type="type" value="gene"/>
</dbReference>
<dbReference type="neXtProt" id="NX_Q96NL1"/>
<dbReference type="OpenTargets" id="ENSG00000164841"/>
<dbReference type="PharmGKB" id="PA142670785"/>
<dbReference type="VEuPathDB" id="HostDB:ENSG00000164841"/>
<dbReference type="eggNOG" id="ENOG502QUYY">
    <property type="taxonomic scope" value="Eukaryota"/>
</dbReference>
<dbReference type="GeneTree" id="ENSGT00530000063880"/>
<dbReference type="HOGENOM" id="CLU_079915_0_0_1"/>
<dbReference type="InParanoid" id="Q96NL1"/>
<dbReference type="OMA" id="WSHESAI"/>
<dbReference type="OrthoDB" id="6096234at2759"/>
<dbReference type="PAN-GO" id="Q96NL1">
    <property type="GO annotations" value="0 GO annotations based on evolutionary models"/>
</dbReference>
<dbReference type="PhylomeDB" id="Q96NL1"/>
<dbReference type="TreeFam" id="TF335735"/>
<dbReference type="PathwayCommons" id="Q96NL1"/>
<dbReference type="SignaLink" id="Q96NL1"/>
<dbReference type="BioGRID-ORCS" id="157753">
    <property type="hits" value="9 hits in 1149 CRISPR screens"/>
</dbReference>
<dbReference type="ChiTaRS" id="TMEM74">
    <property type="organism name" value="human"/>
</dbReference>
<dbReference type="GenomeRNAi" id="157753"/>
<dbReference type="Pharos" id="Q96NL1">
    <property type="development level" value="Tbio"/>
</dbReference>
<dbReference type="PRO" id="PR:Q96NL1"/>
<dbReference type="Proteomes" id="UP000005640">
    <property type="component" value="Chromosome 8"/>
</dbReference>
<dbReference type="RNAct" id="Q96NL1">
    <property type="molecule type" value="protein"/>
</dbReference>
<dbReference type="Bgee" id="ENSG00000164841">
    <property type="expression patterns" value="Expressed in secondary oocyte and 104 other cell types or tissues"/>
</dbReference>
<dbReference type="ExpressionAtlas" id="Q96NL1">
    <property type="expression patterns" value="baseline and differential"/>
</dbReference>
<dbReference type="GO" id="GO:0000421">
    <property type="term" value="C:autophagosome membrane"/>
    <property type="evidence" value="ECO:0007669"/>
    <property type="project" value="UniProtKB-SubCell"/>
</dbReference>
<dbReference type="GO" id="GO:0031410">
    <property type="term" value="C:cytoplasmic vesicle"/>
    <property type="evidence" value="ECO:0007669"/>
    <property type="project" value="UniProtKB-KW"/>
</dbReference>
<dbReference type="GO" id="GO:0005765">
    <property type="term" value="C:lysosomal membrane"/>
    <property type="evidence" value="ECO:0007669"/>
    <property type="project" value="UniProtKB-SubCell"/>
</dbReference>
<dbReference type="GO" id="GO:0005886">
    <property type="term" value="C:plasma membrane"/>
    <property type="evidence" value="ECO:0007669"/>
    <property type="project" value="Ensembl"/>
</dbReference>
<dbReference type="GO" id="GO:0044325">
    <property type="term" value="F:transmembrane transporter binding"/>
    <property type="evidence" value="ECO:0007669"/>
    <property type="project" value="Ensembl"/>
</dbReference>
<dbReference type="GO" id="GO:0051867">
    <property type="term" value="P:general adaptation syndrome, behavioral process"/>
    <property type="evidence" value="ECO:0007669"/>
    <property type="project" value="Ensembl"/>
</dbReference>
<dbReference type="GO" id="GO:0016236">
    <property type="term" value="P:macroautophagy"/>
    <property type="evidence" value="ECO:0000315"/>
    <property type="project" value="HGNC"/>
</dbReference>
<dbReference type="InterPro" id="IPR029695">
    <property type="entry name" value="TMEM74-like"/>
</dbReference>
<dbReference type="PANTHER" id="PTHR16125">
    <property type="entry name" value="TRANSMEMBRANE PROTEIN 74"/>
    <property type="match status" value="1"/>
</dbReference>
<dbReference type="PANTHER" id="PTHR16125:SF3">
    <property type="entry name" value="TRANSMEMBRANE PROTEIN 74"/>
    <property type="match status" value="1"/>
</dbReference>
<dbReference type="Pfam" id="PF14927">
    <property type="entry name" value="Neurensin"/>
    <property type="match status" value="1"/>
</dbReference>
<protein>
    <recommendedName>
        <fullName>Transmembrane protein 74</fullName>
    </recommendedName>
</protein>
<proteinExistence type="evidence at protein level"/>
<reference key="1">
    <citation type="journal article" date="2004" name="Nat. Genet.">
        <title>Complete sequencing and characterization of 21,243 full-length human cDNAs.</title>
        <authorList>
            <person name="Ota T."/>
            <person name="Suzuki Y."/>
            <person name="Nishikawa T."/>
            <person name="Otsuki T."/>
            <person name="Sugiyama T."/>
            <person name="Irie R."/>
            <person name="Wakamatsu A."/>
            <person name="Hayashi K."/>
            <person name="Sato H."/>
            <person name="Nagai K."/>
            <person name="Kimura K."/>
            <person name="Makita H."/>
            <person name="Sekine M."/>
            <person name="Obayashi M."/>
            <person name="Nishi T."/>
            <person name="Shibahara T."/>
            <person name="Tanaka T."/>
            <person name="Ishii S."/>
            <person name="Yamamoto J."/>
            <person name="Saito K."/>
            <person name="Kawai Y."/>
            <person name="Isono Y."/>
            <person name="Nakamura Y."/>
            <person name="Nagahari K."/>
            <person name="Murakami K."/>
            <person name="Yasuda T."/>
            <person name="Iwayanagi T."/>
            <person name="Wagatsuma M."/>
            <person name="Shiratori A."/>
            <person name="Sudo H."/>
            <person name="Hosoiri T."/>
            <person name="Kaku Y."/>
            <person name="Kodaira H."/>
            <person name="Kondo H."/>
            <person name="Sugawara M."/>
            <person name="Takahashi M."/>
            <person name="Kanda K."/>
            <person name="Yokoi T."/>
            <person name="Furuya T."/>
            <person name="Kikkawa E."/>
            <person name="Omura Y."/>
            <person name="Abe K."/>
            <person name="Kamihara K."/>
            <person name="Katsuta N."/>
            <person name="Sato K."/>
            <person name="Tanikawa M."/>
            <person name="Yamazaki M."/>
            <person name="Ninomiya K."/>
            <person name="Ishibashi T."/>
            <person name="Yamashita H."/>
            <person name="Murakawa K."/>
            <person name="Fujimori K."/>
            <person name="Tanai H."/>
            <person name="Kimata M."/>
            <person name="Watanabe M."/>
            <person name="Hiraoka S."/>
            <person name="Chiba Y."/>
            <person name="Ishida S."/>
            <person name="Ono Y."/>
            <person name="Takiguchi S."/>
            <person name="Watanabe S."/>
            <person name="Yosida M."/>
            <person name="Hotuta T."/>
            <person name="Kusano J."/>
            <person name="Kanehori K."/>
            <person name="Takahashi-Fujii A."/>
            <person name="Hara H."/>
            <person name="Tanase T.-O."/>
            <person name="Nomura Y."/>
            <person name="Togiya S."/>
            <person name="Komai F."/>
            <person name="Hara R."/>
            <person name="Takeuchi K."/>
            <person name="Arita M."/>
            <person name="Imose N."/>
            <person name="Musashino K."/>
            <person name="Yuuki H."/>
            <person name="Oshima A."/>
            <person name="Sasaki N."/>
            <person name="Aotsuka S."/>
            <person name="Yoshikawa Y."/>
            <person name="Matsunawa H."/>
            <person name="Ichihara T."/>
            <person name="Shiohata N."/>
            <person name="Sano S."/>
            <person name="Moriya S."/>
            <person name="Momiyama H."/>
            <person name="Satoh N."/>
            <person name="Takami S."/>
            <person name="Terashima Y."/>
            <person name="Suzuki O."/>
            <person name="Nakagawa S."/>
            <person name="Senoh A."/>
            <person name="Mizoguchi H."/>
            <person name="Goto Y."/>
            <person name="Shimizu F."/>
            <person name="Wakebe H."/>
            <person name="Hishigaki H."/>
            <person name="Watanabe T."/>
            <person name="Sugiyama A."/>
            <person name="Takemoto M."/>
            <person name="Kawakami B."/>
            <person name="Yamazaki M."/>
            <person name="Watanabe K."/>
            <person name="Kumagai A."/>
            <person name="Itakura S."/>
            <person name="Fukuzumi Y."/>
            <person name="Fujimori Y."/>
            <person name="Komiyama M."/>
            <person name="Tashiro H."/>
            <person name="Tanigami A."/>
            <person name="Fujiwara T."/>
            <person name="Ono T."/>
            <person name="Yamada K."/>
            <person name="Fujii Y."/>
            <person name="Ozaki K."/>
            <person name="Hirao M."/>
            <person name="Ohmori Y."/>
            <person name="Kawabata A."/>
            <person name="Hikiji T."/>
            <person name="Kobatake N."/>
            <person name="Inagaki H."/>
            <person name="Ikema Y."/>
            <person name="Okamoto S."/>
            <person name="Okitani R."/>
            <person name="Kawakami T."/>
            <person name="Noguchi S."/>
            <person name="Itoh T."/>
            <person name="Shigeta K."/>
            <person name="Senba T."/>
            <person name="Matsumura K."/>
            <person name="Nakajima Y."/>
            <person name="Mizuno T."/>
            <person name="Morinaga M."/>
            <person name="Sasaki M."/>
            <person name="Togashi T."/>
            <person name="Oyama M."/>
            <person name="Hata H."/>
            <person name="Watanabe M."/>
            <person name="Komatsu T."/>
            <person name="Mizushima-Sugano J."/>
            <person name="Satoh T."/>
            <person name="Shirai Y."/>
            <person name="Takahashi Y."/>
            <person name="Nakagawa K."/>
            <person name="Okumura K."/>
            <person name="Nagase T."/>
            <person name="Nomura N."/>
            <person name="Kikuchi H."/>
            <person name="Masuho Y."/>
            <person name="Yamashita R."/>
            <person name="Nakai K."/>
            <person name="Yada T."/>
            <person name="Nakamura Y."/>
            <person name="Ohara O."/>
            <person name="Isogai T."/>
            <person name="Sugano S."/>
        </authorList>
    </citation>
    <scope>NUCLEOTIDE SEQUENCE [LARGE SCALE MRNA]</scope>
    <source>
        <tissue>Brain</tissue>
    </source>
</reference>
<reference key="2">
    <citation type="journal article" date="2004" name="Genome Res.">
        <title>The status, quality, and expansion of the NIH full-length cDNA project: the Mammalian Gene Collection (MGC).</title>
        <authorList>
            <consortium name="The MGC Project Team"/>
        </authorList>
    </citation>
    <scope>NUCLEOTIDE SEQUENCE [LARGE SCALE MRNA]</scope>
    <source>
        <tissue>Brain</tissue>
    </source>
</reference>
<reference key="3">
    <citation type="journal article" date="2008" name="Biochem. Biophys. Res. Commun.">
        <title>TMEM74, a lysosome and autophagosome protein, regulates autophagy.</title>
        <authorList>
            <person name="Yu C."/>
            <person name="Wang L."/>
            <person name="Lv B."/>
            <person name="Lu Y."/>
            <person name="Zeng L."/>
            <person name="Chen Y."/>
            <person name="Ma D."/>
            <person name="Shi T."/>
            <person name="Wang L."/>
        </authorList>
    </citation>
    <scope>FUNCTION</scope>
    <scope>SUBCELLULAR LOCATION</scope>
    <scope>TISSUE SPECIFICITY</scope>
</reference>
<reference key="4">
    <citation type="journal article" date="2009" name="Autophagy">
        <title>High-throughput functional screening for autophagy-related genes and identification of TM9SF1 as an autophagosome-inducing gene.</title>
        <authorList>
            <person name="He P."/>
            <person name="Peng Z."/>
            <person name="Luo Y."/>
            <person name="Wang L."/>
            <person name="Yu P."/>
            <person name="Deng W."/>
            <person name="An Y."/>
            <person name="Shi T."/>
            <person name="Ma D."/>
        </authorList>
    </citation>
    <scope>FUNCTION</scope>
</reference>